<protein>
    <recommendedName>
        <fullName evidence="1">D-aminoacyl-tRNA deacylase</fullName>
        <shortName evidence="1">DTD</shortName>
        <ecNumber evidence="1">3.1.1.96</ecNumber>
    </recommendedName>
    <alternativeName>
        <fullName evidence="1">Gly-tRNA(Ala) deacylase</fullName>
    </alternativeName>
</protein>
<keyword id="KW-0963">Cytoplasm</keyword>
<keyword id="KW-0378">Hydrolase</keyword>
<keyword id="KW-0694">RNA-binding</keyword>
<keyword id="KW-0820">tRNA-binding</keyword>
<evidence type="ECO:0000255" key="1">
    <source>
        <dbReference type="HAMAP-Rule" id="MF_00518"/>
    </source>
</evidence>
<feature type="chain" id="PRO_1000127583" description="D-aminoacyl-tRNA deacylase">
    <location>
        <begin position="1"/>
        <end position="147"/>
    </location>
</feature>
<feature type="short sequence motif" description="Gly-cisPro motif, important for rejection of L-amino acids" evidence="1">
    <location>
        <begin position="136"/>
        <end position="137"/>
    </location>
</feature>
<gene>
    <name evidence="1" type="primary">dtd</name>
    <name type="ordered locus">Spy49_1631c</name>
</gene>
<reference key="1">
    <citation type="journal article" date="2008" name="J. Bacteriol.">
        <title>Genome sequence of a nephritogenic and highly transformable M49 strain of Streptococcus pyogenes.</title>
        <authorList>
            <person name="McShan W.M."/>
            <person name="Ferretti J.J."/>
            <person name="Karasawa T."/>
            <person name="Suvorov A.N."/>
            <person name="Lin S."/>
            <person name="Qin B."/>
            <person name="Jia H."/>
            <person name="Kenton S."/>
            <person name="Najar F."/>
            <person name="Wu H."/>
            <person name="Scott J."/>
            <person name="Roe B.A."/>
            <person name="Savic D.J."/>
        </authorList>
    </citation>
    <scope>NUCLEOTIDE SEQUENCE [LARGE SCALE GENOMIC DNA]</scope>
    <source>
        <strain>NZ131</strain>
    </source>
</reference>
<proteinExistence type="inferred from homology"/>
<name>DTD_STRPZ</name>
<accession>B5XIM6</accession>
<dbReference type="EC" id="3.1.1.96" evidence="1"/>
<dbReference type="EMBL" id="CP000829">
    <property type="protein sequence ID" value="ACI61888.1"/>
    <property type="molecule type" value="Genomic_DNA"/>
</dbReference>
<dbReference type="SMR" id="B5XIM6"/>
<dbReference type="KEGG" id="soz:Spy49_1631c"/>
<dbReference type="HOGENOM" id="CLU_076901_1_0_9"/>
<dbReference type="Proteomes" id="UP000001039">
    <property type="component" value="Chromosome"/>
</dbReference>
<dbReference type="GO" id="GO:0005737">
    <property type="term" value="C:cytoplasm"/>
    <property type="evidence" value="ECO:0007669"/>
    <property type="project" value="UniProtKB-SubCell"/>
</dbReference>
<dbReference type="GO" id="GO:0051500">
    <property type="term" value="F:D-tyrosyl-tRNA(Tyr) deacylase activity"/>
    <property type="evidence" value="ECO:0007669"/>
    <property type="project" value="TreeGrafter"/>
</dbReference>
<dbReference type="GO" id="GO:0106026">
    <property type="term" value="F:Gly-tRNA(Ala) deacylase activity"/>
    <property type="evidence" value="ECO:0007669"/>
    <property type="project" value="UniProtKB-UniRule"/>
</dbReference>
<dbReference type="GO" id="GO:0043908">
    <property type="term" value="F:Ser(Gly)-tRNA(Ala) hydrolase activity"/>
    <property type="evidence" value="ECO:0007669"/>
    <property type="project" value="UniProtKB-UniRule"/>
</dbReference>
<dbReference type="GO" id="GO:0000049">
    <property type="term" value="F:tRNA binding"/>
    <property type="evidence" value="ECO:0007669"/>
    <property type="project" value="UniProtKB-UniRule"/>
</dbReference>
<dbReference type="GO" id="GO:0019478">
    <property type="term" value="P:D-amino acid catabolic process"/>
    <property type="evidence" value="ECO:0007669"/>
    <property type="project" value="UniProtKB-UniRule"/>
</dbReference>
<dbReference type="CDD" id="cd00563">
    <property type="entry name" value="Dtyr_deacylase"/>
    <property type="match status" value="1"/>
</dbReference>
<dbReference type="FunFam" id="3.50.80.10:FF:000001">
    <property type="entry name" value="D-aminoacyl-tRNA deacylase"/>
    <property type="match status" value="1"/>
</dbReference>
<dbReference type="Gene3D" id="3.50.80.10">
    <property type="entry name" value="D-tyrosyl-tRNA(Tyr) deacylase"/>
    <property type="match status" value="1"/>
</dbReference>
<dbReference type="HAMAP" id="MF_00518">
    <property type="entry name" value="Deacylase_Dtd"/>
    <property type="match status" value="1"/>
</dbReference>
<dbReference type="InterPro" id="IPR003732">
    <property type="entry name" value="Daa-tRNA_deacyls_DTD"/>
</dbReference>
<dbReference type="InterPro" id="IPR023509">
    <property type="entry name" value="DTD-like_sf"/>
</dbReference>
<dbReference type="NCBIfam" id="TIGR00256">
    <property type="entry name" value="D-aminoacyl-tRNA deacylase"/>
    <property type="match status" value="1"/>
</dbReference>
<dbReference type="PANTHER" id="PTHR10472:SF5">
    <property type="entry name" value="D-AMINOACYL-TRNA DEACYLASE 1"/>
    <property type="match status" value="1"/>
</dbReference>
<dbReference type="PANTHER" id="PTHR10472">
    <property type="entry name" value="D-TYROSYL-TRNA TYR DEACYLASE"/>
    <property type="match status" value="1"/>
</dbReference>
<dbReference type="Pfam" id="PF02580">
    <property type="entry name" value="Tyr_Deacylase"/>
    <property type="match status" value="1"/>
</dbReference>
<dbReference type="SUPFAM" id="SSF69500">
    <property type="entry name" value="DTD-like"/>
    <property type="match status" value="1"/>
</dbReference>
<organism>
    <name type="scientific">Streptococcus pyogenes serotype M49 (strain NZ131)</name>
    <dbReference type="NCBI Taxonomy" id="471876"/>
    <lineage>
        <taxon>Bacteria</taxon>
        <taxon>Bacillati</taxon>
        <taxon>Bacillota</taxon>
        <taxon>Bacilli</taxon>
        <taxon>Lactobacillales</taxon>
        <taxon>Streptococcaceae</taxon>
        <taxon>Streptococcus</taxon>
    </lineage>
</organism>
<comment type="function">
    <text evidence="1">An aminoacyl-tRNA editing enzyme that deacylates mischarged D-aminoacyl-tRNAs. Also deacylates mischarged glycyl-tRNA(Ala), protecting cells against glycine mischarging by AlaRS. Acts via tRNA-based rather than protein-based catalysis; rejects L-amino acids rather than detecting D-amino acids in the active site. By recycling D-aminoacyl-tRNA to D-amino acids and free tRNA molecules, this enzyme counteracts the toxicity associated with the formation of D-aminoacyl-tRNA entities in vivo and helps enforce protein L-homochirality.</text>
</comment>
<comment type="catalytic activity">
    <reaction evidence="1">
        <text>glycyl-tRNA(Ala) + H2O = tRNA(Ala) + glycine + H(+)</text>
        <dbReference type="Rhea" id="RHEA:53744"/>
        <dbReference type="Rhea" id="RHEA-COMP:9657"/>
        <dbReference type="Rhea" id="RHEA-COMP:13640"/>
        <dbReference type="ChEBI" id="CHEBI:15377"/>
        <dbReference type="ChEBI" id="CHEBI:15378"/>
        <dbReference type="ChEBI" id="CHEBI:57305"/>
        <dbReference type="ChEBI" id="CHEBI:78442"/>
        <dbReference type="ChEBI" id="CHEBI:78522"/>
        <dbReference type="EC" id="3.1.1.96"/>
    </reaction>
</comment>
<comment type="catalytic activity">
    <reaction evidence="1">
        <text>a D-aminoacyl-tRNA + H2O = a tRNA + a D-alpha-amino acid + H(+)</text>
        <dbReference type="Rhea" id="RHEA:13953"/>
        <dbReference type="Rhea" id="RHEA-COMP:10123"/>
        <dbReference type="Rhea" id="RHEA-COMP:10124"/>
        <dbReference type="ChEBI" id="CHEBI:15377"/>
        <dbReference type="ChEBI" id="CHEBI:15378"/>
        <dbReference type="ChEBI" id="CHEBI:59871"/>
        <dbReference type="ChEBI" id="CHEBI:78442"/>
        <dbReference type="ChEBI" id="CHEBI:79333"/>
        <dbReference type="EC" id="3.1.1.96"/>
    </reaction>
</comment>
<comment type="subunit">
    <text evidence="1">Homodimer.</text>
</comment>
<comment type="subcellular location">
    <subcellularLocation>
        <location evidence="1">Cytoplasm</location>
    </subcellularLocation>
</comment>
<comment type="domain">
    <text evidence="1">A Gly-cisPro motif from one monomer fits into the active site of the other monomer to allow specific chiral rejection of L-amino acids.</text>
</comment>
<comment type="similarity">
    <text evidence="1">Belongs to the DTD family.</text>
</comment>
<sequence>MKLVLQRVKEASVSIDGKIAGAINQGLLLLVGVGPDDNAEDLAYAVRKIVNMRIFSDADGKMNQSIQDIKGSILSVSQFTLYADTKKGNRPAFTGAAKPDLARQLYDSFNEQLAEFVPVERGVFGADMQVSLINDGPVTIILDTKCH</sequence>